<reference key="1">
    <citation type="submission" date="2004-10" db="EMBL/GenBank/DDBJ databases">
        <authorList>
            <consortium name="NIH - Xenopus Gene Collection (XGC) project"/>
        </authorList>
    </citation>
    <scope>NUCLEOTIDE SEQUENCE [LARGE SCALE MRNA]</scope>
    <source>
        <tissue>Embryo</tissue>
    </source>
</reference>
<sequence length="348" mass="39729">MDEWLAEFIKRTILKLPFSETVTILKAWGFLTESELQTFTFRYPKDVTATEVVRLCEAKNATVDHAAALDLVFNHAYSNKKSWTVYQMSKPSESENDLFDASEFKLQFKKSIHAVSKNVTLNFKQFGEALWIRIAWGTHNTRPNQYKATFAVYHSQTPYVFITGLGKACRPLMCQALVIAAKYSQIQEMELKSRCLESLKDIVFKRFNQPFSSHHSIPHEKALIPKIVDPRVIYENMREKDRVSHLTRETFGEGPLPKLELASYKLETMFRAESIMDGNLTAVNEPFRCVVKFSSPHLLEAIRSLAPAGIAEAPISTLLSCIPHKARNSFKITEKRGMHPTSSQTTNF</sequence>
<comment type="function">
    <text evidence="1">Probable component of a centromeric complex involved in assembly of kinetochore proteins, mitotic progression and chromosome segregation.</text>
</comment>
<comment type="subcellular location">
    <subcellularLocation>
        <location evidence="1">Nucleus</location>
    </subcellularLocation>
    <subcellularLocation>
        <location evidence="1">Chromosome</location>
        <location evidence="1">Centromere</location>
    </subcellularLocation>
    <text evidence="1">Localizes exclusively in the centromeres.</text>
</comment>
<comment type="similarity">
    <text evidence="2">Belongs to the CENP-N/CHL4 family.</text>
</comment>
<comment type="sequence caution" evidence="2">
    <conflict type="erroneous initiation">
        <sequence resource="EMBL-CDS" id="AAH84246"/>
    </conflict>
</comment>
<feature type="chain" id="PRO_0000249498" description="Centromere protein N-A">
    <location>
        <begin position="1"/>
        <end position="348"/>
    </location>
</feature>
<proteinExistence type="evidence at transcript level"/>
<protein>
    <recommendedName>
        <fullName>Centromere protein N-A</fullName>
        <shortName>CENP-N-A</shortName>
    </recommendedName>
</protein>
<evidence type="ECO:0000250" key="1"/>
<evidence type="ECO:0000305" key="2"/>
<gene>
    <name type="primary">cenpn-a</name>
</gene>
<accession>Q5XH29</accession>
<organism>
    <name type="scientific">Xenopus laevis</name>
    <name type="common">African clawed frog</name>
    <dbReference type="NCBI Taxonomy" id="8355"/>
    <lineage>
        <taxon>Eukaryota</taxon>
        <taxon>Metazoa</taxon>
        <taxon>Chordata</taxon>
        <taxon>Craniata</taxon>
        <taxon>Vertebrata</taxon>
        <taxon>Euteleostomi</taxon>
        <taxon>Amphibia</taxon>
        <taxon>Batrachia</taxon>
        <taxon>Anura</taxon>
        <taxon>Pipoidea</taxon>
        <taxon>Pipidae</taxon>
        <taxon>Xenopodinae</taxon>
        <taxon>Xenopus</taxon>
        <taxon>Xenopus</taxon>
    </lineage>
</organism>
<keyword id="KW-0137">Centromere</keyword>
<keyword id="KW-0158">Chromosome</keyword>
<keyword id="KW-0539">Nucleus</keyword>
<keyword id="KW-1185">Reference proteome</keyword>
<name>CENNA_XENLA</name>
<dbReference type="EMBL" id="BC084246">
    <property type="protein sequence ID" value="AAH84246.1"/>
    <property type="status" value="ALT_INIT"/>
    <property type="molecule type" value="mRNA"/>
</dbReference>
<dbReference type="RefSeq" id="NP_001088250.1">
    <property type="nucleotide sequence ID" value="NM_001094781.1"/>
</dbReference>
<dbReference type="SMR" id="Q5XH29"/>
<dbReference type="DNASU" id="495081"/>
<dbReference type="GeneID" id="495081"/>
<dbReference type="KEGG" id="xla:495081"/>
<dbReference type="AGR" id="Xenbase:XB-GENE-6077945"/>
<dbReference type="CTD" id="495081"/>
<dbReference type="Xenbase" id="XB-GENE-6077945">
    <property type="gene designation" value="cenpn.S"/>
</dbReference>
<dbReference type="OrthoDB" id="6585699at2759"/>
<dbReference type="Proteomes" id="UP000186698">
    <property type="component" value="Chromosome 4S"/>
</dbReference>
<dbReference type="Bgee" id="495081">
    <property type="expression patterns" value="Expressed in egg cell and 15 other cell types or tissues"/>
</dbReference>
<dbReference type="GO" id="GO:0000775">
    <property type="term" value="C:chromosome, centromeric region"/>
    <property type="evidence" value="ECO:0007669"/>
    <property type="project" value="UniProtKB-SubCell"/>
</dbReference>
<dbReference type="GO" id="GO:0005654">
    <property type="term" value="C:nucleoplasm"/>
    <property type="evidence" value="ECO:0000318"/>
    <property type="project" value="GO_Central"/>
</dbReference>
<dbReference type="GO" id="GO:0034080">
    <property type="term" value="P:CENP-A containing chromatin assembly"/>
    <property type="evidence" value="ECO:0007669"/>
    <property type="project" value="InterPro"/>
</dbReference>
<dbReference type="GO" id="GO:0007059">
    <property type="term" value="P:chromosome segregation"/>
    <property type="evidence" value="ECO:0007669"/>
    <property type="project" value="InterPro"/>
</dbReference>
<dbReference type="InterPro" id="IPR052011">
    <property type="entry name" value="CENP-NAC/CAD_complex"/>
</dbReference>
<dbReference type="InterPro" id="IPR007902">
    <property type="entry name" value="Chl4/mis15/CENP-N"/>
</dbReference>
<dbReference type="PANTHER" id="PTHR46790">
    <property type="entry name" value="CENTROMERE PROTEIN N"/>
    <property type="match status" value="1"/>
</dbReference>
<dbReference type="PANTHER" id="PTHR46790:SF1">
    <property type="entry name" value="CENTROMERE PROTEIN N"/>
    <property type="match status" value="1"/>
</dbReference>
<dbReference type="Pfam" id="PF05238">
    <property type="entry name" value="CENP-N"/>
    <property type="match status" value="1"/>
</dbReference>